<comment type="tissue specificity">
    <text>Tapetum of anthers.</text>
</comment>
<comment type="developmental stage">
    <text>Young inflorescences (5 mm in size), and 10 mm buds.</text>
</comment>
<organism>
    <name type="scientific">Antirrhinum majus</name>
    <name type="common">Garden snapdragon</name>
    <dbReference type="NCBI Taxonomy" id="4151"/>
    <lineage>
        <taxon>Eukaryota</taxon>
        <taxon>Viridiplantae</taxon>
        <taxon>Streptophyta</taxon>
        <taxon>Embryophyta</taxon>
        <taxon>Tracheophyta</taxon>
        <taxon>Spermatophyta</taxon>
        <taxon>Magnoliopsida</taxon>
        <taxon>eudicotyledons</taxon>
        <taxon>Gunneridae</taxon>
        <taxon>Pentapetalae</taxon>
        <taxon>asterids</taxon>
        <taxon>lamiids</taxon>
        <taxon>Lamiales</taxon>
        <taxon>Plantaginaceae</taxon>
        <taxon>Antirrhineae</taxon>
        <taxon>Antirrhinum</taxon>
    </lineage>
</organism>
<accession>P24609</accession>
<dbReference type="EMBL" id="X55434">
    <property type="protein sequence ID" value="CAA39078.1"/>
    <property type="molecule type" value="Genomic_DNA"/>
</dbReference>
<dbReference type="PIR" id="S14390">
    <property type="entry name" value="S14390"/>
</dbReference>
<evidence type="ECO:0000255" key="1"/>
<evidence type="ECO:0000256" key="2">
    <source>
        <dbReference type="SAM" id="MobiDB-lite"/>
    </source>
</evidence>
<feature type="signal peptide" evidence="1">
    <location>
        <begin position="1"/>
        <end position="22"/>
    </location>
</feature>
<feature type="chain" id="PRO_0000022471" description="Protein TAP2">
    <location>
        <begin position="23"/>
        <end position="131"/>
    </location>
</feature>
<feature type="region of interest" description="Disordered" evidence="2">
    <location>
        <begin position="75"/>
        <end position="101"/>
    </location>
</feature>
<sequence>MAKSSPTYTVLFLLGLLALSTATTTFQNEGQRSLIGQFNSRGTFKKIKNHPSESVQRSNEDFAMHKTKLKHKFVARSGGETDVKKMEGSMPDQGKTAGRDQQVTVQNIKEASKENVGGNTNDIYKSGGMHH</sequence>
<keyword id="KW-0732">Signal</keyword>
<protein>
    <recommendedName>
        <fullName>Protein TAP2</fullName>
    </recommendedName>
</protein>
<proteinExistence type="evidence at transcript level"/>
<reference key="1">
    <citation type="journal article" date="1991" name="FEBS Lett.">
        <title>Molecular analysis of tap2, an anther-specific gene from Antirrhinum majus.</title>
        <authorList>
            <person name="Nacken W.K.F."/>
            <person name="Huijser P."/>
            <person name="Saedler H."/>
            <person name="Sommer H."/>
        </authorList>
    </citation>
    <scope>NUCLEOTIDE SEQUENCE [GENOMIC DNA]</scope>
    <source>
        <strain>cv. Sippe 50</strain>
        <tissue>Anther</tissue>
    </source>
</reference>
<gene>
    <name type="primary">TAP2</name>
</gene>
<name>TAP2_ANTMA</name>